<evidence type="ECO:0000255" key="1">
    <source>
        <dbReference type="HAMAP-Rule" id="MF_01840"/>
    </source>
</evidence>
<sequence>MVDALREANTASQSERRETLLTPRFYTTDFEALAKLDISAMEADFEALLAEFQADYNREHFQRDAGFVEQAHQIDPQWRALMLEFLERSCTSEFSGFLLYKEISRRLKAANPLLAECFKAMSRDEARHAGFLNKAMGDYDLGLDLSNLAKQKKYTFFKPKFIFYATYLSEKIGYWRYIAIFRHLERHPENRIHPLFNYFKNWCQDENRHGDFFGLILKSQPQLLKGPINRLWVRFFLLSFCLTMYLNDRKPHNLYSALGLDASHYAMEVLRQTNLDSGKVFPLILDLDNPRFQRHLDRCADLNLQLEALSGKSPLARLPVIAALAGTIAQLFLLKPVAPPAPEMVR</sequence>
<accession>Q7NFA1</accession>
<proteinExistence type="inferred from homology"/>
<comment type="function">
    <text evidence="1">Catalyzes the formation of the isocyclic ring in chlorophyll biosynthesis. Mediates the cyclase reaction, which results in the formation of divinylprotochlorophyllide (Pchlide) characteristic of all chlorophylls from magnesium-protoporphyrin IX 13-monomethyl ester (MgPMME).</text>
</comment>
<comment type="catalytic activity">
    <reaction evidence="1">
        <text>Mg-protoporphyrin IX 13-monomethyl ester + 3 NADPH + 3 O2 + 2 H(+) = 3,8-divinyl protochlorophyllide a + 3 NADP(+) + 5 H2O</text>
        <dbReference type="Rhea" id="RHEA:33235"/>
        <dbReference type="ChEBI" id="CHEBI:15377"/>
        <dbReference type="ChEBI" id="CHEBI:15378"/>
        <dbReference type="ChEBI" id="CHEBI:15379"/>
        <dbReference type="ChEBI" id="CHEBI:57783"/>
        <dbReference type="ChEBI" id="CHEBI:58349"/>
        <dbReference type="ChEBI" id="CHEBI:58632"/>
        <dbReference type="ChEBI" id="CHEBI:60491"/>
        <dbReference type="EC" id="1.14.13.81"/>
    </reaction>
</comment>
<comment type="cofactor">
    <cofactor evidence="1">
        <name>Fe cation</name>
        <dbReference type="ChEBI" id="CHEBI:24875"/>
    </cofactor>
</comment>
<comment type="pathway">
    <text evidence="1">Porphyrin-containing compound metabolism; chlorophyll biosynthesis (light-independent).</text>
</comment>
<comment type="similarity">
    <text evidence="1">Belongs to the AcsF family.</text>
</comment>
<organism>
    <name type="scientific">Gloeobacter violaceus (strain ATCC 29082 / PCC 7421)</name>
    <dbReference type="NCBI Taxonomy" id="251221"/>
    <lineage>
        <taxon>Bacteria</taxon>
        <taxon>Bacillati</taxon>
        <taxon>Cyanobacteriota</taxon>
        <taxon>Cyanophyceae</taxon>
        <taxon>Gloeobacterales</taxon>
        <taxon>Gloeobacteraceae</taxon>
        <taxon>Gloeobacter</taxon>
    </lineage>
</organism>
<keyword id="KW-0149">Chlorophyll biosynthesis</keyword>
<keyword id="KW-0408">Iron</keyword>
<keyword id="KW-0479">Metal-binding</keyword>
<keyword id="KW-0521">NADP</keyword>
<keyword id="KW-0560">Oxidoreductase</keyword>
<keyword id="KW-0602">Photosynthesis</keyword>
<keyword id="KW-1185">Reference proteome</keyword>
<feature type="chain" id="PRO_0000217529" description="Magnesium-protoporphyrin IX monomethyl ester [oxidative] cyclase">
    <location>
        <begin position="1"/>
        <end position="346"/>
    </location>
</feature>
<reference key="1">
    <citation type="journal article" date="2003" name="DNA Res.">
        <title>Complete genome structure of Gloeobacter violaceus PCC 7421, a cyanobacterium that lacks thylakoids.</title>
        <authorList>
            <person name="Nakamura Y."/>
            <person name="Kaneko T."/>
            <person name="Sato S."/>
            <person name="Mimuro M."/>
            <person name="Miyashita H."/>
            <person name="Tsuchiya T."/>
            <person name="Sasamoto S."/>
            <person name="Watanabe A."/>
            <person name="Kawashima K."/>
            <person name="Kishida Y."/>
            <person name="Kiyokawa C."/>
            <person name="Kohara M."/>
            <person name="Matsumoto M."/>
            <person name="Matsuno A."/>
            <person name="Nakazaki N."/>
            <person name="Shimpo S."/>
            <person name="Takeuchi C."/>
            <person name="Yamada M."/>
            <person name="Tabata S."/>
        </authorList>
    </citation>
    <scope>NUCLEOTIDE SEQUENCE [LARGE SCALE GENOMIC DNA]</scope>
    <source>
        <strain>ATCC 29082 / PCC 7421</strain>
    </source>
</reference>
<protein>
    <recommendedName>
        <fullName evidence="1">Magnesium-protoporphyrin IX monomethyl ester [oxidative] cyclase</fullName>
        <shortName evidence="1">Mg-protoporphyrin IX monomethyl ester oxidative cyclase</shortName>
        <ecNumber evidence="1">1.14.13.81</ecNumber>
    </recommendedName>
</protein>
<name>ACSF_GLOVI</name>
<gene>
    <name evidence="1" type="primary">acsF</name>
    <name type="ordered locus">gll3625</name>
</gene>
<dbReference type="EC" id="1.14.13.81" evidence="1"/>
<dbReference type="EMBL" id="BA000045">
    <property type="protein sequence ID" value="BAC91566.1"/>
    <property type="molecule type" value="Genomic_DNA"/>
</dbReference>
<dbReference type="RefSeq" id="NP_926571.1">
    <property type="nucleotide sequence ID" value="NC_005125.1"/>
</dbReference>
<dbReference type="RefSeq" id="WP_011143614.1">
    <property type="nucleotide sequence ID" value="NC_005125.1"/>
</dbReference>
<dbReference type="SMR" id="Q7NFA1"/>
<dbReference type="STRING" id="251221.gene:10761140"/>
<dbReference type="EnsemblBacteria" id="BAC91566">
    <property type="protein sequence ID" value="BAC91566"/>
    <property type="gene ID" value="BAC91566"/>
</dbReference>
<dbReference type="KEGG" id="gvi:gll3625"/>
<dbReference type="PATRIC" id="fig|251221.4.peg.3659"/>
<dbReference type="eggNOG" id="COG1633">
    <property type="taxonomic scope" value="Bacteria"/>
</dbReference>
<dbReference type="HOGENOM" id="CLU_048037_0_0_3"/>
<dbReference type="InParanoid" id="Q7NFA1"/>
<dbReference type="OrthoDB" id="141643at2"/>
<dbReference type="PhylomeDB" id="Q7NFA1"/>
<dbReference type="UniPathway" id="UPA00670"/>
<dbReference type="Proteomes" id="UP000000557">
    <property type="component" value="Chromosome"/>
</dbReference>
<dbReference type="GO" id="GO:0005506">
    <property type="term" value="F:iron ion binding"/>
    <property type="evidence" value="ECO:0007669"/>
    <property type="project" value="UniProtKB-UniRule"/>
</dbReference>
<dbReference type="GO" id="GO:0048529">
    <property type="term" value="F:magnesium-protoporphyrin IX monomethyl ester (oxidative) cyclase activity"/>
    <property type="evidence" value="ECO:0000318"/>
    <property type="project" value="GO_Central"/>
</dbReference>
<dbReference type="GO" id="GO:0015995">
    <property type="term" value="P:chlorophyll biosynthetic process"/>
    <property type="evidence" value="ECO:0000318"/>
    <property type="project" value="GO_Central"/>
</dbReference>
<dbReference type="GO" id="GO:0036068">
    <property type="term" value="P:light-independent chlorophyll biosynthetic process"/>
    <property type="evidence" value="ECO:0007669"/>
    <property type="project" value="UniProtKB-UniRule"/>
</dbReference>
<dbReference type="GO" id="GO:0015979">
    <property type="term" value="P:photosynthesis"/>
    <property type="evidence" value="ECO:0007669"/>
    <property type="project" value="UniProtKB-UniRule"/>
</dbReference>
<dbReference type="CDD" id="cd01047">
    <property type="entry name" value="ACSF"/>
    <property type="match status" value="1"/>
</dbReference>
<dbReference type="HAMAP" id="MF_01840">
    <property type="entry name" value="AcsF"/>
    <property type="match status" value="1"/>
</dbReference>
<dbReference type="InterPro" id="IPR008434">
    <property type="entry name" value="AcsF"/>
</dbReference>
<dbReference type="InterPro" id="IPR009078">
    <property type="entry name" value="Ferritin-like_SF"/>
</dbReference>
<dbReference type="InterPro" id="IPR003251">
    <property type="entry name" value="Rr_diiron-bd_dom"/>
</dbReference>
<dbReference type="NCBIfam" id="TIGR02029">
    <property type="entry name" value="AcsF"/>
    <property type="match status" value="1"/>
</dbReference>
<dbReference type="NCBIfam" id="NF010172">
    <property type="entry name" value="PRK13654.1"/>
    <property type="match status" value="1"/>
</dbReference>
<dbReference type="PANTHER" id="PTHR31053">
    <property type="entry name" value="MAGNESIUM-PROTOPORPHYRIN IX MONOMETHYL ESTER [OXIDATIVE] CYCLASE, CHLOROPLASTIC"/>
    <property type="match status" value="1"/>
</dbReference>
<dbReference type="PANTHER" id="PTHR31053:SF2">
    <property type="entry name" value="MAGNESIUM-PROTOPORPHYRIN IX MONOMETHYL ESTER [OXIDATIVE] CYCLASE, CHLOROPLASTIC"/>
    <property type="match status" value="1"/>
</dbReference>
<dbReference type="Pfam" id="PF02915">
    <property type="entry name" value="Rubrerythrin"/>
    <property type="match status" value="1"/>
</dbReference>
<dbReference type="SUPFAM" id="SSF47240">
    <property type="entry name" value="Ferritin-like"/>
    <property type="match status" value="1"/>
</dbReference>